<feature type="chain" id="PRO_0000131651" description="Small ribosomal subunit protein uS5">
    <location>
        <begin position="1"/>
        <end position="225"/>
    </location>
</feature>
<feature type="domain" description="S5 DRBM" evidence="1">
    <location>
        <begin position="57"/>
        <end position="120"/>
    </location>
</feature>
<protein>
    <recommendedName>
        <fullName evidence="1">Small ribosomal subunit protein uS5</fullName>
    </recommendedName>
    <alternativeName>
        <fullName evidence="2">30S ribosomal protein S5</fullName>
    </alternativeName>
</protein>
<comment type="function">
    <text evidence="1">With S4 and S12 plays an important role in translational accuracy.</text>
</comment>
<comment type="subunit">
    <text evidence="1">Part of the 30S ribosomal subunit. Contacts protein S4.</text>
</comment>
<comment type="domain">
    <text>The N-terminal domain interacts with the head of the 30S subunit; the C-terminal domain interacts with the body and contacts protein S4. The interaction surface between S4 and S5 is involved in control of translational fidelity.</text>
</comment>
<comment type="similarity">
    <text evidence="1">Belongs to the universal ribosomal protein uS5 family.</text>
</comment>
<proteinExistence type="inferred from homology"/>
<sequence length="225" mass="24376">MAEKRAEKRKFNTEAWEPKTQIGRMVKEGTISDISYIMDKGLPLLEPEIVDALLPDLEEQVLDVKLVQRMHKSGRRARYRATVVVGNKNGYVGVGMGKSKEVGPAIRKAIAHAKLSLIKVRVGCGSWECGCGSPHSIPFTAKGACGSVKVELLPAPRGVGLVAGNVAKAVLGLAGVKDAWTKTFGDTRTTYNFAEATFDALNNLNFVRCLPNQKEKLGLTEGRVL</sequence>
<dbReference type="EMBL" id="BX950229">
    <property type="protein sequence ID" value="CAF30975.1"/>
    <property type="molecule type" value="Genomic_DNA"/>
</dbReference>
<dbReference type="RefSeq" id="WP_011171363.1">
    <property type="nucleotide sequence ID" value="NC_005791.1"/>
</dbReference>
<dbReference type="SMR" id="Q6LXD3"/>
<dbReference type="STRING" id="267377.MMP1419"/>
<dbReference type="EnsemblBacteria" id="CAF30975">
    <property type="protein sequence ID" value="CAF30975"/>
    <property type="gene ID" value="MMP1419"/>
</dbReference>
<dbReference type="KEGG" id="mmp:MMP1419"/>
<dbReference type="PATRIC" id="fig|267377.15.peg.1455"/>
<dbReference type="eggNOG" id="arCOG04087">
    <property type="taxonomic scope" value="Archaea"/>
</dbReference>
<dbReference type="HOGENOM" id="CLU_065898_0_1_2"/>
<dbReference type="OrthoDB" id="38155at2157"/>
<dbReference type="Proteomes" id="UP000000590">
    <property type="component" value="Chromosome"/>
</dbReference>
<dbReference type="GO" id="GO:0022627">
    <property type="term" value="C:cytosolic small ribosomal subunit"/>
    <property type="evidence" value="ECO:0007669"/>
    <property type="project" value="TreeGrafter"/>
</dbReference>
<dbReference type="GO" id="GO:0019843">
    <property type="term" value="F:rRNA binding"/>
    <property type="evidence" value="ECO:0007669"/>
    <property type="project" value="UniProtKB-UniRule"/>
</dbReference>
<dbReference type="GO" id="GO:0003735">
    <property type="term" value="F:structural constituent of ribosome"/>
    <property type="evidence" value="ECO:0007669"/>
    <property type="project" value="InterPro"/>
</dbReference>
<dbReference type="GO" id="GO:0006412">
    <property type="term" value="P:translation"/>
    <property type="evidence" value="ECO:0007669"/>
    <property type="project" value="UniProtKB-UniRule"/>
</dbReference>
<dbReference type="FunFam" id="3.30.160.20:FF:000002">
    <property type="entry name" value="40S ribosomal protein S2"/>
    <property type="match status" value="1"/>
</dbReference>
<dbReference type="FunFam" id="3.30.230.10:FF:000004">
    <property type="entry name" value="40S ribosomal protein S2"/>
    <property type="match status" value="1"/>
</dbReference>
<dbReference type="Gene3D" id="3.30.160.20">
    <property type="match status" value="1"/>
</dbReference>
<dbReference type="Gene3D" id="3.30.230.10">
    <property type="match status" value="1"/>
</dbReference>
<dbReference type="HAMAP" id="MF_01307_A">
    <property type="entry name" value="Ribosomal_uS5_A"/>
    <property type="match status" value="1"/>
</dbReference>
<dbReference type="InterPro" id="IPR020568">
    <property type="entry name" value="Ribosomal_Su5_D2-typ_SF"/>
</dbReference>
<dbReference type="InterPro" id="IPR000851">
    <property type="entry name" value="Ribosomal_uS5"/>
</dbReference>
<dbReference type="InterPro" id="IPR047866">
    <property type="entry name" value="Ribosomal_uS5_arc"/>
</dbReference>
<dbReference type="InterPro" id="IPR005324">
    <property type="entry name" value="Ribosomal_uS5_C"/>
</dbReference>
<dbReference type="InterPro" id="IPR005711">
    <property type="entry name" value="Ribosomal_uS5_euk/arc"/>
</dbReference>
<dbReference type="InterPro" id="IPR013810">
    <property type="entry name" value="Ribosomal_uS5_N"/>
</dbReference>
<dbReference type="InterPro" id="IPR018192">
    <property type="entry name" value="Ribosomal_uS5_N_CS"/>
</dbReference>
<dbReference type="InterPro" id="IPR014721">
    <property type="entry name" value="Ribsml_uS5_D2-typ_fold_subgr"/>
</dbReference>
<dbReference type="NCBIfam" id="NF003125">
    <property type="entry name" value="PRK04044.1"/>
    <property type="match status" value="1"/>
</dbReference>
<dbReference type="NCBIfam" id="TIGR01020">
    <property type="entry name" value="uS5_euk_arch"/>
    <property type="match status" value="1"/>
</dbReference>
<dbReference type="PANTHER" id="PTHR13718:SF4">
    <property type="entry name" value="40S RIBOSOMAL PROTEIN S2"/>
    <property type="match status" value="1"/>
</dbReference>
<dbReference type="PANTHER" id="PTHR13718">
    <property type="entry name" value="RIBOSOMAL S SUBUNIT"/>
    <property type="match status" value="1"/>
</dbReference>
<dbReference type="Pfam" id="PF00333">
    <property type="entry name" value="Ribosomal_S5"/>
    <property type="match status" value="1"/>
</dbReference>
<dbReference type="Pfam" id="PF03719">
    <property type="entry name" value="Ribosomal_S5_C"/>
    <property type="match status" value="1"/>
</dbReference>
<dbReference type="SUPFAM" id="SSF54768">
    <property type="entry name" value="dsRNA-binding domain-like"/>
    <property type="match status" value="1"/>
</dbReference>
<dbReference type="SUPFAM" id="SSF54211">
    <property type="entry name" value="Ribosomal protein S5 domain 2-like"/>
    <property type="match status" value="1"/>
</dbReference>
<dbReference type="PROSITE" id="PS00585">
    <property type="entry name" value="RIBOSOMAL_S5"/>
    <property type="match status" value="1"/>
</dbReference>
<dbReference type="PROSITE" id="PS50881">
    <property type="entry name" value="S5_DSRBD"/>
    <property type="match status" value="1"/>
</dbReference>
<reference key="1">
    <citation type="journal article" date="2004" name="J. Bacteriol.">
        <title>Complete genome sequence of the genetically tractable hydrogenotrophic methanogen Methanococcus maripaludis.</title>
        <authorList>
            <person name="Hendrickson E.L."/>
            <person name="Kaul R."/>
            <person name="Zhou Y."/>
            <person name="Bovee D."/>
            <person name="Chapman P."/>
            <person name="Chung J."/>
            <person name="Conway de Macario E."/>
            <person name="Dodsworth J.A."/>
            <person name="Gillett W."/>
            <person name="Graham D.E."/>
            <person name="Hackett M."/>
            <person name="Haydock A.K."/>
            <person name="Kang A."/>
            <person name="Land M.L."/>
            <person name="Levy R."/>
            <person name="Lie T.J."/>
            <person name="Major T.A."/>
            <person name="Moore B.C."/>
            <person name="Porat I."/>
            <person name="Palmeiri A."/>
            <person name="Rouse G."/>
            <person name="Saenphimmachak C."/>
            <person name="Soell D."/>
            <person name="Van Dien S."/>
            <person name="Wang T."/>
            <person name="Whitman W.B."/>
            <person name="Xia Q."/>
            <person name="Zhang Y."/>
            <person name="Larimer F.W."/>
            <person name="Olson M.V."/>
            <person name="Leigh J.A."/>
        </authorList>
    </citation>
    <scope>NUCLEOTIDE SEQUENCE [LARGE SCALE GENOMIC DNA]</scope>
    <source>
        <strain>DSM 14266 / JCM 13030 / NBRC 101832 / S2 / LL</strain>
    </source>
</reference>
<name>RS5_METMP</name>
<accession>Q6LXD3</accession>
<gene>
    <name evidence="1" type="primary">rps5</name>
    <name type="ordered locus">MMP1419</name>
</gene>
<keyword id="KW-1185">Reference proteome</keyword>
<keyword id="KW-0687">Ribonucleoprotein</keyword>
<keyword id="KW-0689">Ribosomal protein</keyword>
<keyword id="KW-0694">RNA-binding</keyword>
<keyword id="KW-0699">rRNA-binding</keyword>
<evidence type="ECO:0000255" key="1">
    <source>
        <dbReference type="HAMAP-Rule" id="MF_01307"/>
    </source>
</evidence>
<evidence type="ECO:0000305" key="2"/>
<organism>
    <name type="scientific">Methanococcus maripaludis (strain DSM 14266 / JCM 13030 / NBRC 101832 / S2 / LL)</name>
    <dbReference type="NCBI Taxonomy" id="267377"/>
    <lineage>
        <taxon>Archaea</taxon>
        <taxon>Methanobacteriati</taxon>
        <taxon>Methanobacteriota</taxon>
        <taxon>Methanomada group</taxon>
        <taxon>Methanococci</taxon>
        <taxon>Methanococcales</taxon>
        <taxon>Methanococcaceae</taxon>
        <taxon>Methanococcus</taxon>
    </lineage>
</organism>